<feature type="chain" id="PRO_0000082516" description="Probable ubiquitin-conjugating enzyme E2 7">
    <location>
        <begin position="1"/>
        <end position="164"/>
    </location>
</feature>
<feature type="domain" description="UBC core" evidence="1">
    <location>
        <begin position="3"/>
        <end position="163"/>
    </location>
</feature>
<feature type="active site" description="Glycyl thioester intermediate" evidence="1 2">
    <location>
        <position position="88"/>
    </location>
</feature>
<feature type="helix" evidence="3">
    <location>
        <begin position="5"/>
        <end position="17"/>
    </location>
</feature>
<feature type="strand" evidence="3">
    <location>
        <begin position="23"/>
        <end position="29"/>
    </location>
</feature>
<feature type="strand" evidence="3">
    <location>
        <begin position="35"/>
        <end position="41"/>
    </location>
</feature>
<feature type="strand" evidence="3">
    <location>
        <begin position="52"/>
        <end position="58"/>
    </location>
</feature>
<feature type="helix" evidence="3">
    <location>
        <begin position="63"/>
        <end position="65"/>
    </location>
</feature>
<feature type="strand" evidence="3">
    <location>
        <begin position="69"/>
        <end position="72"/>
    </location>
</feature>
<feature type="strand" evidence="3">
    <location>
        <begin position="85"/>
        <end position="87"/>
    </location>
</feature>
<feature type="helix" evidence="3">
    <location>
        <begin position="90"/>
        <end position="92"/>
    </location>
</feature>
<feature type="helix" evidence="3">
    <location>
        <begin position="115"/>
        <end position="127"/>
    </location>
</feature>
<feature type="helix" evidence="3">
    <location>
        <begin position="137"/>
        <end position="144"/>
    </location>
</feature>
<feature type="helix" evidence="3">
    <location>
        <begin position="147"/>
        <end position="161"/>
    </location>
</feature>
<gene>
    <name type="primary">ubc-7</name>
    <name type="ORF">F58A4.10</name>
</gene>
<accession>P34477</accession>
<sequence>MEQSSLLLKKQLADMRRVPVDGFSAGLVDDNDIYKWEVLVIGPPDTLYEGGFFKAILDFPRDYPQKPPKMKFISEIWHPNIDKEGNVCISILHDPGDDKWGYERPEERWLPVHTVETILLSVISMLTDPNFESPANVDAAKMQRENYAEFKKKVAQCVRRSQEE</sequence>
<comment type="function">
    <text evidence="1">Catalyzes the covalent attachment of ubiquitin to other proteins.</text>
</comment>
<comment type="catalytic activity">
    <reaction evidence="1 2">
        <text>S-ubiquitinyl-[E1 ubiquitin-activating enzyme]-L-cysteine + [E2 ubiquitin-conjugating enzyme]-L-cysteine = [E1 ubiquitin-activating enzyme]-L-cysteine + S-ubiquitinyl-[E2 ubiquitin-conjugating enzyme]-L-cysteine.</text>
        <dbReference type="EC" id="2.3.2.23"/>
    </reaction>
</comment>
<comment type="pathway">
    <text evidence="1">Protein modification; protein ubiquitination.</text>
</comment>
<comment type="similarity">
    <text evidence="1">Belongs to the ubiquitin-conjugating enzyme family.</text>
</comment>
<proteinExistence type="evidence at protein level"/>
<evidence type="ECO:0000255" key="1">
    <source>
        <dbReference type="PROSITE-ProRule" id="PRU00388"/>
    </source>
</evidence>
<evidence type="ECO:0000255" key="2">
    <source>
        <dbReference type="PROSITE-ProRule" id="PRU10133"/>
    </source>
</evidence>
<evidence type="ECO:0007829" key="3">
    <source>
        <dbReference type="PDB" id="1PZV"/>
    </source>
</evidence>
<reference key="1">
    <citation type="journal article" date="1994" name="Nature">
        <title>2.2 Mb of contiguous nucleotide sequence from chromosome III of C. elegans.</title>
        <authorList>
            <person name="Wilson R."/>
            <person name="Ainscough R."/>
            <person name="Anderson K."/>
            <person name="Baynes C."/>
            <person name="Berks M."/>
            <person name="Bonfield J."/>
            <person name="Burton J."/>
            <person name="Connell M."/>
            <person name="Copsey T."/>
            <person name="Cooper J."/>
            <person name="Coulson A."/>
            <person name="Craxton M."/>
            <person name="Dear S."/>
            <person name="Du Z."/>
            <person name="Durbin R."/>
            <person name="Favello A."/>
            <person name="Fraser A."/>
            <person name="Fulton L."/>
            <person name="Gardner A."/>
            <person name="Green P."/>
            <person name="Hawkins T."/>
            <person name="Hillier L."/>
            <person name="Jier M."/>
            <person name="Johnston L."/>
            <person name="Jones M."/>
            <person name="Kershaw J."/>
            <person name="Kirsten J."/>
            <person name="Laisster N."/>
            <person name="Latreille P."/>
            <person name="Lightning J."/>
            <person name="Lloyd C."/>
            <person name="Mortimore B."/>
            <person name="O'Callaghan M."/>
            <person name="Parsons J."/>
            <person name="Percy C."/>
            <person name="Rifken L."/>
            <person name="Roopra A."/>
            <person name="Saunders D."/>
            <person name="Shownkeen R."/>
            <person name="Sims M."/>
            <person name="Smaldon N."/>
            <person name="Smith A."/>
            <person name="Smith M."/>
            <person name="Sonnhammer E."/>
            <person name="Staden R."/>
            <person name="Sulston J."/>
            <person name="Thierry-Mieg J."/>
            <person name="Thomas K."/>
            <person name="Vaudin M."/>
            <person name="Vaughan K."/>
            <person name="Waterston R."/>
            <person name="Watson A."/>
            <person name="Weinstock L."/>
            <person name="Wilkinson-Sproat J."/>
            <person name="Wohldman P."/>
        </authorList>
    </citation>
    <scope>NUCLEOTIDE SEQUENCE [LARGE SCALE GENOMIC DNA]</scope>
    <source>
        <strain>Bristol N2</strain>
    </source>
</reference>
<reference key="2">
    <citation type="journal article" date="1998" name="Science">
        <title>Genome sequence of the nematode C. elegans: a platform for investigating biology.</title>
        <authorList>
            <consortium name="The C. elegans sequencing consortium"/>
        </authorList>
    </citation>
    <scope>NUCLEOTIDE SEQUENCE [LARGE SCALE GENOMIC DNA]</scope>
    <source>
        <strain>Bristol N2</strain>
    </source>
</reference>
<name>UBC7_CAEEL</name>
<organism>
    <name type="scientific">Caenorhabditis elegans</name>
    <dbReference type="NCBI Taxonomy" id="6239"/>
    <lineage>
        <taxon>Eukaryota</taxon>
        <taxon>Metazoa</taxon>
        <taxon>Ecdysozoa</taxon>
        <taxon>Nematoda</taxon>
        <taxon>Chromadorea</taxon>
        <taxon>Rhabditida</taxon>
        <taxon>Rhabditina</taxon>
        <taxon>Rhabditomorpha</taxon>
        <taxon>Rhabditoidea</taxon>
        <taxon>Rhabditidae</taxon>
        <taxon>Peloderinae</taxon>
        <taxon>Caenorhabditis</taxon>
    </lineage>
</organism>
<protein>
    <recommendedName>
        <fullName>Probable ubiquitin-conjugating enzyme E2 7</fullName>
        <ecNumber>2.3.2.23</ecNumber>
    </recommendedName>
    <alternativeName>
        <fullName>E2 ubiquitin-conjugating enzyme 7</fullName>
    </alternativeName>
    <alternativeName>
        <fullName>Ubiquitin carrier protein 7</fullName>
    </alternativeName>
    <alternativeName>
        <fullName>Ubiquitin-protein ligase 7</fullName>
    </alternativeName>
</protein>
<dbReference type="EC" id="2.3.2.23"/>
<dbReference type="EMBL" id="Z22179">
    <property type="protein sequence ID" value="CAA80166.1"/>
    <property type="molecule type" value="Genomic_DNA"/>
</dbReference>
<dbReference type="PIR" id="S40982">
    <property type="entry name" value="S40982"/>
</dbReference>
<dbReference type="RefSeq" id="NP_499133.1">
    <property type="nucleotide sequence ID" value="NM_066732.7"/>
</dbReference>
<dbReference type="PDB" id="1PZV">
    <property type="method" value="X-ray"/>
    <property type="resolution" value="2.52 A"/>
    <property type="chains" value="A=1-164"/>
</dbReference>
<dbReference type="PDBsum" id="1PZV"/>
<dbReference type="SMR" id="P34477"/>
<dbReference type="BioGRID" id="41558">
    <property type="interactions" value="5"/>
</dbReference>
<dbReference type="FunCoup" id="P34477">
    <property type="interactions" value="2853"/>
</dbReference>
<dbReference type="STRING" id="6239.F58A4.10.1"/>
<dbReference type="PaxDb" id="6239-F58A4.10"/>
<dbReference type="PeptideAtlas" id="P34477"/>
<dbReference type="EnsemblMetazoa" id="F58A4.10.1">
    <property type="protein sequence ID" value="F58A4.10.1"/>
    <property type="gene ID" value="WBGene00006704"/>
</dbReference>
<dbReference type="GeneID" id="176363"/>
<dbReference type="KEGG" id="cel:CELE_F58A4.10"/>
<dbReference type="UCSC" id="F58A4.10.1">
    <property type="organism name" value="c. elegans"/>
</dbReference>
<dbReference type="AGR" id="WB:WBGene00006704"/>
<dbReference type="CTD" id="176363"/>
<dbReference type="WormBase" id="F58A4.10">
    <property type="protein sequence ID" value="CE00216"/>
    <property type="gene ID" value="WBGene00006704"/>
    <property type="gene designation" value="ubc-7"/>
</dbReference>
<dbReference type="eggNOG" id="KOG0425">
    <property type="taxonomic scope" value="Eukaryota"/>
</dbReference>
<dbReference type="GeneTree" id="ENSGT00940000155228"/>
<dbReference type="HOGENOM" id="CLU_030988_10_1_1"/>
<dbReference type="InParanoid" id="P34477"/>
<dbReference type="OMA" id="RKVTRCV"/>
<dbReference type="OrthoDB" id="19692at2759"/>
<dbReference type="PhylomeDB" id="P34477"/>
<dbReference type="Reactome" id="R-CEL-8866652">
    <property type="pathway name" value="Synthesis of active ubiquitin: roles of E1 and E2 enzymes"/>
</dbReference>
<dbReference type="Reactome" id="R-CEL-983168">
    <property type="pathway name" value="Antigen processing: Ubiquitination &amp; Proteasome degradation"/>
</dbReference>
<dbReference type="UniPathway" id="UPA00143"/>
<dbReference type="EvolutionaryTrace" id="P34477"/>
<dbReference type="PRO" id="PR:P34477"/>
<dbReference type="Proteomes" id="UP000001940">
    <property type="component" value="Chromosome III"/>
</dbReference>
<dbReference type="Bgee" id="WBGene00006704">
    <property type="expression patterns" value="Expressed in embryo and 4 other cell types or tissues"/>
</dbReference>
<dbReference type="GO" id="GO:0005524">
    <property type="term" value="F:ATP binding"/>
    <property type="evidence" value="ECO:0007669"/>
    <property type="project" value="UniProtKB-KW"/>
</dbReference>
<dbReference type="GO" id="GO:0061631">
    <property type="term" value="F:ubiquitin conjugating enzyme activity"/>
    <property type="evidence" value="ECO:0000318"/>
    <property type="project" value="GO_Central"/>
</dbReference>
<dbReference type="GO" id="GO:0043161">
    <property type="term" value="P:proteasome-mediated ubiquitin-dependent protein catabolic process"/>
    <property type="evidence" value="ECO:0000318"/>
    <property type="project" value="GO_Central"/>
</dbReference>
<dbReference type="GO" id="GO:0000209">
    <property type="term" value="P:protein polyubiquitination"/>
    <property type="evidence" value="ECO:0000318"/>
    <property type="project" value="GO_Central"/>
</dbReference>
<dbReference type="CDD" id="cd23795">
    <property type="entry name" value="UBCc_UBE2G1"/>
    <property type="match status" value="1"/>
</dbReference>
<dbReference type="FunFam" id="3.10.110.10:FF:000018">
    <property type="entry name" value="Ubiquitin-conjugating enzyme E2 G1"/>
    <property type="match status" value="1"/>
</dbReference>
<dbReference type="Gene3D" id="3.10.110.10">
    <property type="entry name" value="Ubiquitin Conjugating Enzyme"/>
    <property type="match status" value="1"/>
</dbReference>
<dbReference type="InterPro" id="IPR050113">
    <property type="entry name" value="Ub_conjugating_enzyme"/>
</dbReference>
<dbReference type="InterPro" id="IPR000608">
    <property type="entry name" value="UBQ-conjugat_E2_core"/>
</dbReference>
<dbReference type="InterPro" id="IPR023313">
    <property type="entry name" value="UBQ-conjugating_AS"/>
</dbReference>
<dbReference type="InterPro" id="IPR016135">
    <property type="entry name" value="UBQ-conjugating_enzyme/RWD"/>
</dbReference>
<dbReference type="PANTHER" id="PTHR24067">
    <property type="entry name" value="UBIQUITIN-CONJUGATING ENZYME E2"/>
    <property type="match status" value="1"/>
</dbReference>
<dbReference type="Pfam" id="PF00179">
    <property type="entry name" value="UQ_con"/>
    <property type="match status" value="1"/>
</dbReference>
<dbReference type="SMART" id="SM00212">
    <property type="entry name" value="UBCc"/>
    <property type="match status" value="1"/>
</dbReference>
<dbReference type="SUPFAM" id="SSF54495">
    <property type="entry name" value="UBC-like"/>
    <property type="match status" value="1"/>
</dbReference>
<dbReference type="PROSITE" id="PS00183">
    <property type="entry name" value="UBC_1"/>
    <property type="match status" value="1"/>
</dbReference>
<dbReference type="PROSITE" id="PS50127">
    <property type="entry name" value="UBC_2"/>
    <property type="match status" value="1"/>
</dbReference>
<keyword id="KW-0002">3D-structure</keyword>
<keyword id="KW-0067">ATP-binding</keyword>
<keyword id="KW-0547">Nucleotide-binding</keyword>
<keyword id="KW-1185">Reference proteome</keyword>
<keyword id="KW-0808">Transferase</keyword>
<keyword id="KW-0833">Ubl conjugation pathway</keyword>